<protein>
    <recommendedName>
        <fullName evidence="1">5-methyltetrahydropteroyltriglutamate--homocysteine methyltransferase</fullName>
        <ecNumber evidence="1">2.1.1.14</ecNumber>
    </recommendedName>
    <alternativeName>
        <fullName evidence="1">Cobalamin-independent methionine synthase</fullName>
    </alternativeName>
    <alternativeName>
        <fullName evidence="1">Methionine synthase, vitamin-B12 independent isozyme</fullName>
    </alternativeName>
</protein>
<sequence length="758" mass="85748">MTIVTNLGFPRIGARRELKRALESHWRGETDATQLQHTARELRARHWRLQRDAGVDLPPSNDFSLYDHVLDTAFLFDAIPQRYRGLVDADPLAGYFAMARGRQADNIDLHALEMTKWFDTNYHYLVPELHRDQHFALRGNKPIAEFEEALALGITTRPVLLGPVSFLLLSKTVDGSNRLDLLERLLPVYTQLLRQLQESGAEWVQIDEPTLVLDLDAQTQQAFRKAYAILNQGPRPKLLLTSYFGPLGDNLELALQLPADGLHIDLVRGTEQLDAVLNTLPAGRVLSAGLVNGRNIWRTDLDNALTMARYAQGHVGADRLWLAPSCSLLHVPVDLEQEKNLDADVRNWLAFAKQKLSELRVLADALDNKPEAETALTQTRQALEARRQSPKVHRPDVAQRLAALTPDTTRRNTAYPQRSQAQQHTLNLPAYPTTTIGSFPQTLEVREARAQFKSGKLSESDYEAFLKAETERCVRTQEEIGLDVLVHGEFERNDMVEYFGEQLDGFIFTKLGWVQSYGSRCVKPPIIYGDVVRPAPMTVTWSAYAQSLTDKPMKGMLTGPVTMLQWSFVRDDQERAQTCRQIALALRDEVQDLEKAGIKVIQIDEPAIREGLPLRRGEWADYLNWAVESFRIASSNVHDTTQIHTHMCYSEFNDIIEAVAALDADVISIETSRSRMELLDAFVKFRYPNAIGPGVYDIHSPRVPQEEEMVLLLKKARAVLPPEQLWVNPDCGLKTRGWKETRAALQTMVHAAQRLRAE</sequence>
<proteinExistence type="inferred from homology"/>
<keyword id="KW-0028">Amino-acid biosynthesis</keyword>
<keyword id="KW-0479">Metal-binding</keyword>
<keyword id="KW-0486">Methionine biosynthesis</keyword>
<keyword id="KW-0489">Methyltransferase</keyword>
<keyword id="KW-1185">Reference proteome</keyword>
<keyword id="KW-0677">Repeat</keyword>
<keyword id="KW-0808">Transferase</keyword>
<keyword id="KW-0862">Zinc</keyword>
<name>METE_XYLFT</name>
<dbReference type="EC" id="2.1.1.14" evidence="1"/>
<dbReference type="EMBL" id="AE009442">
    <property type="protein sequence ID" value="AAO29157.1"/>
    <property type="molecule type" value="Genomic_DNA"/>
</dbReference>
<dbReference type="RefSeq" id="WP_004088273.1">
    <property type="nucleotide sequence ID" value="NC_004556.1"/>
</dbReference>
<dbReference type="SMR" id="Q87BY8"/>
<dbReference type="GeneID" id="93905122"/>
<dbReference type="KEGG" id="xft:PD_1308"/>
<dbReference type="HOGENOM" id="CLU_013175_0_0_6"/>
<dbReference type="UniPathway" id="UPA00051">
    <property type="reaction ID" value="UER00082"/>
</dbReference>
<dbReference type="Proteomes" id="UP000002516">
    <property type="component" value="Chromosome"/>
</dbReference>
<dbReference type="GO" id="GO:0003871">
    <property type="term" value="F:5-methyltetrahydropteroyltriglutamate-homocysteine S-methyltransferase activity"/>
    <property type="evidence" value="ECO:0007669"/>
    <property type="project" value="UniProtKB-UniRule"/>
</dbReference>
<dbReference type="GO" id="GO:0008270">
    <property type="term" value="F:zinc ion binding"/>
    <property type="evidence" value="ECO:0007669"/>
    <property type="project" value="InterPro"/>
</dbReference>
<dbReference type="GO" id="GO:0009086">
    <property type="term" value="P:methionine biosynthetic process"/>
    <property type="evidence" value="ECO:0007669"/>
    <property type="project" value="UniProtKB-UniRule"/>
</dbReference>
<dbReference type="GO" id="GO:0032259">
    <property type="term" value="P:methylation"/>
    <property type="evidence" value="ECO:0007669"/>
    <property type="project" value="UniProtKB-KW"/>
</dbReference>
<dbReference type="CDD" id="cd03311">
    <property type="entry name" value="CIMS_C_terminal_like"/>
    <property type="match status" value="1"/>
</dbReference>
<dbReference type="CDD" id="cd03312">
    <property type="entry name" value="CIMS_N_terminal_like"/>
    <property type="match status" value="1"/>
</dbReference>
<dbReference type="FunFam" id="3.20.20.210:FF:000002">
    <property type="entry name" value="5-methyltetrahydropteroyltriglutamate--homocysteine methyltransferase"/>
    <property type="match status" value="1"/>
</dbReference>
<dbReference type="FunFam" id="3.20.20.210:FF:000003">
    <property type="entry name" value="5-methyltetrahydropteroyltriglutamate--homocysteine methyltransferase"/>
    <property type="match status" value="1"/>
</dbReference>
<dbReference type="Gene3D" id="3.20.20.210">
    <property type="match status" value="2"/>
</dbReference>
<dbReference type="HAMAP" id="MF_00172">
    <property type="entry name" value="Meth_synth"/>
    <property type="match status" value="1"/>
</dbReference>
<dbReference type="InterPro" id="IPR013215">
    <property type="entry name" value="Cbl-indep_Met_Synth_N"/>
</dbReference>
<dbReference type="InterPro" id="IPR006276">
    <property type="entry name" value="Cobalamin-indep_Met_synthase"/>
</dbReference>
<dbReference type="InterPro" id="IPR002629">
    <property type="entry name" value="Met_Synth_C/arc"/>
</dbReference>
<dbReference type="InterPro" id="IPR038071">
    <property type="entry name" value="UROD/MetE-like_sf"/>
</dbReference>
<dbReference type="NCBIfam" id="TIGR01371">
    <property type="entry name" value="met_syn_B12ind"/>
    <property type="match status" value="1"/>
</dbReference>
<dbReference type="NCBIfam" id="NF003556">
    <property type="entry name" value="PRK05222.1"/>
    <property type="match status" value="1"/>
</dbReference>
<dbReference type="PANTHER" id="PTHR30519">
    <property type="entry name" value="5-METHYLTETRAHYDROPTEROYLTRIGLUTAMATE--HOMOCYSTEINE METHYLTRANSFERASE"/>
    <property type="match status" value="1"/>
</dbReference>
<dbReference type="Pfam" id="PF08267">
    <property type="entry name" value="Meth_synt_1"/>
    <property type="match status" value="1"/>
</dbReference>
<dbReference type="Pfam" id="PF01717">
    <property type="entry name" value="Meth_synt_2"/>
    <property type="match status" value="1"/>
</dbReference>
<dbReference type="PIRSF" id="PIRSF000382">
    <property type="entry name" value="MeTrfase_B12_ind"/>
    <property type="match status" value="1"/>
</dbReference>
<dbReference type="SUPFAM" id="SSF51726">
    <property type="entry name" value="UROD/MetE-like"/>
    <property type="match status" value="2"/>
</dbReference>
<feature type="chain" id="PRO_0000098681" description="5-methyltetrahydropteroyltriglutamate--homocysteine methyltransferase">
    <location>
        <begin position="1"/>
        <end position="758"/>
    </location>
</feature>
<feature type="active site" description="Proton donor" evidence="1">
    <location>
        <position position="699"/>
    </location>
</feature>
<feature type="binding site" evidence="1">
    <location>
        <begin position="16"/>
        <end position="19"/>
    </location>
    <ligand>
        <name>5-methyltetrahydropteroyltri-L-glutamate</name>
        <dbReference type="ChEBI" id="CHEBI:58207"/>
    </ligand>
</feature>
<feature type="binding site" evidence="1">
    <location>
        <position position="116"/>
    </location>
    <ligand>
        <name>5-methyltetrahydropteroyltri-L-glutamate</name>
        <dbReference type="ChEBI" id="CHEBI:58207"/>
    </ligand>
</feature>
<feature type="binding site" evidence="1">
    <location>
        <begin position="436"/>
        <end position="438"/>
    </location>
    <ligand>
        <name>L-homocysteine</name>
        <dbReference type="ChEBI" id="CHEBI:58199"/>
    </ligand>
</feature>
<feature type="binding site" evidence="1">
    <location>
        <begin position="436"/>
        <end position="438"/>
    </location>
    <ligand>
        <name>L-methionine</name>
        <dbReference type="ChEBI" id="CHEBI:57844"/>
    </ligand>
</feature>
<feature type="binding site" evidence="1">
    <location>
        <position position="489"/>
    </location>
    <ligand>
        <name>L-homocysteine</name>
        <dbReference type="ChEBI" id="CHEBI:58199"/>
    </ligand>
</feature>
<feature type="binding site" evidence="1">
    <location>
        <position position="489"/>
    </location>
    <ligand>
        <name>L-methionine</name>
        <dbReference type="ChEBI" id="CHEBI:57844"/>
    </ligand>
</feature>
<feature type="binding site" evidence="1">
    <location>
        <begin position="520"/>
        <end position="521"/>
    </location>
    <ligand>
        <name>5-methyltetrahydropteroyltri-L-glutamate</name>
        <dbReference type="ChEBI" id="CHEBI:58207"/>
    </ligand>
</feature>
<feature type="binding site" evidence="1">
    <location>
        <position position="566"/>
    </location>
    <ligand>
        <name>5-methyltetrahydropteroyltri-L-glutamate</name>
        <dbReference type="ChEBI" id="CHEBI:58207"/>
    </ligand>
</feature>
<feature type="binding site" evidence="1">
    <location>
        <position position="604"/>
    </location>
    <ligand>
        <name>L-homocysteine</name>
        <dbReference type="ChEBI" id="CHEBI:58199"/>
    </ligand>
</feature>
<feature type="binding site" evidence="1">
    <location>
        <position position="604"/>
    </location>
    <ligand>
        <name>L-methionine</name>
        <dbReference type="ChEBI" id="CHEBI:57844"/>
    </ligand>
</feature>
<feature type="binding site" evidence="1">
    <location>
        <position position="610"/>
    </location>
    <ligand>
        <name>5-methyltetrahydropteroyltri-L-glutamate</name>
        <dbReference type="ChEBI" id="CHEBI:58207"/>
    </ligand>
</feature>
<feature type="binding site" evidence="1">
    <location>
        <position position="646"/>
    </location>
    <ligand>
        <name>Zn(2+)</name>
        <dbReference type="ChEBI" id="CHEBI:29105"/>
        <note>catalytic</note>
    </ligand>
</feature>
<feature type="binding site" evidence="1">
    <location>
        <position position="648"/>
    </location>
    <ligand>
        <name>Zn(2+)</name>
        <dbReference type="ChEBI" id="CHEBI:29105"/>
        <note>catalytic</note>
    </ligand>
</feature>
<feature type="binding site" evidence="1">
    <location>
        <position position="670"/>
    </location>
    <ligand>
        <name>Zn(2+)</name>
        <dbReference type="ChEBI" id="CHEBI:29105"/>
        <note>catalytic</note>
    </ligand>
</feature>
<feature type="binding site" evidence="1">
    <location>
        <position position="731"/>
    </location>
    <ligand>
        <name>Zn(2+)</name>
        <dbReference type="ChEBI" id="CHEBI:29105"/>
        <note>catalytic</note>
    </ligand>
</feature>
<evidence type="ECO:0000255" key="1">
    <source>
        <dbReference type="HAMAP-Rule" id="MF_00172"/>
    </source>
</evidence>
<organism>
    <name type="scientific">Xylella fastidiosa (strain Temecula1 / ATCC 700964)</name>
    <dbReference type="NCBI Taxonomy" id="183190"/>
    <lineage>
        <taxon>Bacteria</taxon>
        <taxon>Pseudomonadati</taxon>
        <taxon>Pseudomonadota</taxon>
        <taxon>Gammaproteobacteria</taxon>
        <taxon>Lysobacterales</taxon>
        <taxon>Lysobacteraceae</taxon>
        <taxon>Xylella</taxon>
    </lineage>
</organism>
<reference key="1">
    <citation type="journal article" date="2003" name="J. Bacteriol.">
        <title>Comparative analyses of the complete genome sequences of Pierce's disease and citrus variegated chlorosis strains of Xylella fastidiosa.</title>
        <authorList>
            <person name="Van Sluys M.A."/>
            <person name="de Oliveira M.C."/>
            <person name="Monteiro-Vitorello C.B."/>
            <person name="Miyaki C.Y."/>
            <person name="Furlan L.R."/>
            <person name="Camargo L.E.A."/>
            <person name="da Silva A.C.R."/>
            <person name="Moon D.H."/>
            <person name="Takita M.A."/>
            <person name="Lemos E.G.M."/>
            <person name="Machado M.A."/>
            <person name="Ferro M.I.T."/>
            <person name="da Silva F.R."/>
            <person name="Goldman M.H.S."/>
            <person name="Goldman G.H."/>
            <person name="Lemos M.V.F."/>
            <person name="El-Dorry H."/>
            <person name="Tsai S.M."/>
            <person name="Carrer H."/>
            <person name="Carraro D.M."/>
            <person name="de Oliveira R.C."/>
            <person name="Nunes L.R."/>
            <person name="Siqueira W.J."/>
            <person name="Coutinho L.L."/>
            <person name="Kimura E.T."/>
            <person name="Ferro E.S."/>
            <person name="Harakava R."/>
            <person name="Kuramae E.E."/>
            <person name="Marino C.L."/>
            <person name="Giglioti E."/>
            <person name="Abreu I.L."/>
            <person name="Alves L.M.C."/>
            <person name="do Amaral A.M."/>
            <person name="Baia G.S."/>
            <person name="Blanco S.R."/>
            <person name="Brito M.S."/>
            <person name="Cannavan F.S."/>
            <person name="Celestino A.V."/>
            <person name="da Cunha A.F."/>
            <person name="Fenille R.C."/>
            <person name="Ferro J.A."/>
            <person name="Formighieri E.F."/>
            <person name="Kishi L.T."/>
            <person name="Leoni S.G."/>
            <person name="Oliveira A.R."/>
            <person name="Rosa V.E. Jr."/>
            <person name="Sassaki F.T."/>
            <person name="Sena J.A.D."/>
            <person name="de Souza A.A."/>
            <person name="Truffi D."/>
            <person name="Tsukumo F."/>
            <person name="Yanai G.M."/>
            <person name="Zaros L.G."/>
            <person name="Civerolo E.L."/>
            <person name="Simpson A.J.G."/>
            <person name="Almeida N.F. Jr."/>
            <person name="Setubal J.C."/>
            <person name="Kitajima J.P."/>
        </authorList>
    </citation>
    <scope>NUCLEOTIDE SEQUENCE [LARGE SCALE GENOMIC DNA]</scope>
    <source>
        <strain>Temecula1 / ATCC 700964</strain>
    </source>
</reference>
<gene>
    <name evidence="1" type="primary">metE</name>
    <name type="ordered locus">PD_1308</name>
</gene>
<comment type="function">
    <text evidence="1">Catalyzes the transfer of a methyl group from 5-methyltetrahydrofolate to homocysteine resulting in methionine formation.</text>
</comment>
<comment type="catalytic activity">
    <reaction evidence="1">
        <text>5-methyltetrahydropteroyltri-L-glutamate + L-homocysteine = tetrahydropteroyltri-L-glutamate + L-methionine</text>
        <dbReference type="Rhea" id="RHEA:21196"/>
        <dbReference type="ChEBI" id="CHEBI:57844"/>
        <dbReference type="ChEBI" id="CHEBI:58140"/>
        <dbReference type="ChEBI" id="CHEBI:58199"/>
        <dbReference type="ChEBI" id="CHEBI:58207"/>
        <dbReference type="EC" id="2.1.1.14"/>
    </reaction>
</comment>
<comment type="cofactor">
    <cofactor evidence="1">
        <name>Zn(2+)</name>
        <dbReference type="ChEBI" id="CHEBI:29105"/>
    </cofactor>
    <text evidence="1">Binds 1 zinc ion per subunit.</text>
</comment>
<comment type="pathway">
    <text evidence="1">Amino-acid biosynthesis; L-methionine biosynthesis via de novo pathway; L-methionine from L-homocysteine (MetE route): step 1/1.</text>
</comment>
<comment type="similarity">
    <text evidence="1">Belongs to the vitamin-B12 independent methionine synthase family.</text>
</comment>
<accession>Q87BY8</accession>